<gene>
    <name evidence="1" type="primary">mtnN</name>
    <name type="ordered locus">UTI89_C0175</name>
</gene>
<keyword id="KW-0028">Amino-acid biosynthesis</keyword>
<keyword id="KW-0378">Hydrolase</keyword>
<keyword id="KW-0486">Methionine biosynthesis</keyword>
<reference key="1">
    <citation type="journal article" date="2006" name="Proc. Natl. Acad. Sci. U.S.A.">
        <title>Identification of genes subject to positive selection in uropathogenic strains of Escherichia coli: a comparative genomics approach.</title>
        <authorList>
            <person name="Chen S.L."/>
            <person name="Hung C.-S."/>
            <person name="Xu J."/>
            <person name="Reigstad C.S."/>
            <person name="Magrini V."/>
            <person name="Sabo A."/>
            <person name="Blasiar D."/>
            <person name="Bieri T."/>
            <person name="Meyer R.R."/>
            <person name="Ozersky P."/>
            <person name="Armstrong J.R."/>
            <person name="Fulton R.S."/>
            <person name="Latreille J.P."/>
            <person name="Spieth J."/>
            <person name="Hooton T.M."/>
            <person name="Mardis E.R."/>
            <person name="Hultgren S.J."/>
            <person name="Gordon J.I."/>
        </authorList>
    </citation>
    <scope>NUCLEOTIDE SEQUENCE [LARGE SCALE GENOMIC DNA]</scope>
    <source>
        <strain>UTI89 / UPEC</strain>
    </source>
</reference>
<dbReference type="EC" id="3.2.2.9" evidence="1"/>
<dbReference type="EMBL" id="CP000243">
    <property type="protein sequence ID" value="ABE05685.1"/>
    <property type="molecule type" value="Genomic_DNA"/>
</dbReference>
<dbReference type="RefSeq" id="WP_000689844.1">
    <property type="nucleotide sequence ID" value="NZ_CP064825.1"/>
</dbReference>
<dbReference type="SMR" id="Q1RG29"/>
<dbReference type="GeneID" id="93777267"/>
<dbReference type="KEGG" id="eci:UTI89_C0175"/>
<dbReference type="HOGENOM" id="CLU_031248_2_2_6"/>
<dbReference type="UniPathway" id="UPA00904">
    <property type="reaction ID" value="UER00871"/>
</dbReference>
<dbReference type="Proteomes" id="UP000001952">
    <property type="component" value="Chromosome"/>
</dbReference>
<dbReference type="GO" id="GO:0005829">
    <property type="term" value="C:cytosol"/>
    <property type="evidence" value="ECO:0007669"/>
    <property type="project" value="TreeGrafter"/>
</dbReference>
<dbReference type="GO" id="GO:0008782">
    <property type="term" value="F:adenosylhomocysteine nucleosidase activity"/>
    <property type="evidence" value="ECO:0007669"/>
    <property type="project" value="UniProtKB-UniRule"/>
</dbReference>
<dbReference type="GO" id="GO:0008930">
    <property type="term" value="F:methylthioadenosine nucleosidase activity"/>
    <property type="evidence" value="ECO:0007669"/>
    <property type="project" value="UniProtKB-UniRule"/>
</dbReference>
<dbReference type="GO" id="GO:0019509">
    <property type="term" value="P:L-methionine salvage from methylthioadenosine"/>
    <property type="evidence" value="ECO:0007669"/>
    <property type="project" value="UniProtKB-UniRule"/>
</dbReference>
<dbReference type="GO" id="GO:0019284">
    <property type="term" value="P:L-methionine salvage from S-adenosylmethionine"/>
    <property type="evidence" value="ECO:0007669"/>
    <property type="project" value="TreeGrafter"/>
</dbReference>
<dbReference type="GO" id="GO:0046124">
    <property type="term" value="P:purine deoxyribonucleoside catabolic process"/>
    <property type="evidence" value="ECO:0007669"/>
    <property type="project" value="UniProtKB-UniRule"/>
</dbReference>
<dbReference type="CDD" id="cd09008">
    <property type="entry name" value="MTAN"/>
    <property type="match status" value="1"/>
</dbReference>
<dbReference type="FunFam" id="3.40.50.1580:FF:000001">
    <property type="entry name" value="MTA/SAH nucleosidase family protein"/>
    <property type="match status" value="1"/>
</dbReference>
<dbReference type="Gene3D" id="3.40.50.1580">
    <property type="entry name" value="Nucleoside phosphorylase domain"/>
    <property type="match status" value="1"/>
</dbReference>
<dbReference type="HAMAP" id="MF_01684">
    <property type="entry name" value="Salvage_MtnN"/>
    <property type="match status" value="1"/>
</dbReference>
<dbReference type="InterPro" id="IPR010049">
    <property type="entry name" value="MTA_SAH_Nsdase"/>
</dbReference>
<dbReference type="InterPro" id="IPR000845">
    <property type="entry name" value="Nucleoside_phosphorylase_d"/>
</dbReference>
<dbReference type="InterPro" id="IPR035994">
    <property type="entry name" value="Nucleoside_phosphorylase_sf"/>
</dbReference>
<dbReference type="NCBIfam" id="TIGR01704">
    <property type="entry name" value="MTA_SAH-Nsdase"/>
    <property type="match status" value="1"/>
</dbReference>
<dbReference type="NCBIfam" id="NF004079">
    <property type="entry name" value="PRK05584.1"/>
    <property type="match status" value="1"/>
</dbReference>
<dbReference type="PANTHER" id="PTHR46832">
    <property type="entry name" value="5'-METHYLTHIOADENOSINE/S-ADENOSYLHOMOCYSTEINE NUCLEOSIDASE"/>
    <property type="match status" value="1"/>
</dbReference>
<dbReference type="PANTHER" id="PTHR46832:SF1">
    <property type="entry name" value="5'-METHYLTHIOADENOSINE_S-ADENOSYLHOMOCYSTEINE NUCLEOSIDASE"/>
    <property type="match status" value="1"/>
</dbReference>
<dbReference type="Pfam" id="PF01048">
    <property type="entry name" value="PNP_UDP_1"/>
    <property type="match status" value="1"/>
</dbReference>
<dbReference type="SUPFAM" id="SSF53167">
    <property type="entry name" value="Purine and uridine phosphorylases"/>
    <property type="match status" value="1"/>
</dbReference>
<organism>
    <name type="scientific">Escherichia coli (strain UTI89 / UPEC)</name>
    <dbReference type="NCBI Taxonomy" id="364106"/>
    <lineage>
        <taxon>Bacteria</taxon>
        <taxon>Pseudomonadati</taxon>
        <taxon>Pseudomonadota</taxon>
        <taxon>Gammaproteobacteria</taxon>
        <taxon>Enterobacterales</taxon>
        <taxon>Enterobacteriaceae</taxon>
        <taxon>Escherichia</taxon>
    </lineage>
</organism>
<protein>
    <recommendedName>
        <fullName evidence="1">5'-methylthioadenosine/S-adenosylhomocysteine nucleosidase</fullName>
        <shortName evidence="1">MTA/SAH nucleosidase</shortName>
        <shortName evidence="1">MTAN</shortName>
        <ecNumber evidence="1">3.2.2.9</ecNumber>
    </recommendedName>
    <alternativeName>
        <fullName evidence="1">5'-deoxyadenosine nucleosidase</fullName>
        <shortName evidence="1">DOA nucleosidase</shortName>
        <shortName evidence="1">dAdo nucleosidase</shortName>
    </alternativeName>
    <alternativeName>
        <fullName evidence="1">5'-methylthioadenosine nucleosidase</fullName>
        <shortName evidence="1">MTA nucleosidase</shortName>
    </alternativeName>
    <alternativeName>
        <fullName evidence="1">S-adenosylhomocysteine nucleosidase</fullName>
        <shortName evidence="1">AdoHcy nucleosidase</shortName>
        <shortName evidence="1">SAH nucleosidase</shortName>
        <shortName evidence="1">SRH nucleosidase</shortName>
    </alternativeName>
</protein>
<name>MTNN_ECOUT</name>
<accession>Q1RG29</accession>
<evidence type="ECO:0000255" key="1">
    <source>
        <dbReference type="HAMAP-Rule" id="MF_01684"/>
    </source>
</evidence>
<sequence>MKIGIIGAMEEEVTLLRDKIENRQTISLGGCEIYTGQLNGTEVALLKSGIGKVAAALGATLLLEHCKPDVIINTGSAGGLAPTLKVGDIVVSDEARYHDADVTAFGYEYGQLPGCPAGFKADDKLIAAAEACIAELNLNAVRGLIVSGDAFINGSVGLAKIRHNFPQAIAVEMEATAIAHVCHNFNVPFVVVRAISDVADQQSHLSFDEFLAVAAKQSSLMVESLVQKLAHG</sequence>
<comment type="function">
    <text evidence="1">Catalyzes the irreversible cleavage of the glycosidic bond in both 5'-methylthioadenosine (MTA) and S-adenosylhomocysteine (SAH/AdoHcy) to adenine and the corresponding thioribose, 5'-methylthioribose and S-ribosylhomocysteine, respectively. Also cleaves 5'-deoxyadenosine, a toxic by-product of radical S-adenosylmethionine (SAM) enzymes, into 5-deoxyribose and adenine. Thus, is required for in vivo function of the radical SAM enzymes biotin synthase and lipoic acid synthase, that are inhibited by 5'-deoxyadenosine accumulation.</text>
</comment>
<comment type="catalytic activity">
    <reaction evidence="1">
        <text>S-adenosyl-L-homocysteine + H2O = S-(5-deoxy-D-ribos-5-yl)-L-homocysteine + adenine</text>
        <dbReference type="Rhea" id="RHEA:17805"/>
        <dbReference type="ChEBI" id="CHEBI:15377"/>
        <dbReference type="ChEBI" id="CHEBI:16708"/>
        <dbReference type="ChEBI" id="CHEBI:57856"/>
        <dbReference type="ChEBI" id="CHEBI:58195"/>
        <dbReference type="EC" id="3.2.2.9"/>
    </reaction>
</comment>
<comment type="catalytic activity">
    <reaction evidence="1">
        <text>S-methyl-5'-thioadenosine + H2O = 5-(methylsulfanyl)-D-ribose + adenine</text>
        <dbReference type="Rhea" id="RHEA:13617"/>
        <dbReference type="ChEBI" id="CHEBI:15377"/>
        <dbReference type="ChEBI" id="CHEBI:16708"/>
        <dbReference type="ChEBI" id="CHEBI:17509"/>
        <dbReference type="ChEBI" id="CHEBI:78440"/>
        <dbReference type="EC" id="3.2.2.9"/>
    </reaction>
</comment>
<comment type="catalytic activity">
    <reaction evidence="1">
        <text>5'-deoxyadenosine + H2O = 5-deoxy-D-ribose + adenine</text>
        <dbReference type="Rhea" id="RHEA:29859"/>
        <dbReference type="ChEBI" id="CHEBI:15377"/>
        <dbReference type="ChEBI" id="CHEBI:16708"/>
        <dbReference type="ChEBI" id="CHEBI:17319"/>
        <dbReference type="ChEBI" id="CHEBI:149540"/>
        <dbReference type="EC" id="3.2.2.9"/>
    </reaction>
    <physiologicalReaction direction="left-to-right" evidence="1">
        <dbReference type="Rhea" id="RHEA:29860"/>
    </physiologicalReaction>
</comment>
<comment type="pathway">
    <text evidence="1">Amino-acid biosynthesis; L-methionine biosynthesis via salvage pathway; S-methyl-5-thio-alpha-D-ribose 1-phosphate from S-methyl-5'-thioadenosine (hydrolase route): step 1/2.</text>
</comment>
<comment type="subunit">
    <text evidence="1">Homodimer.</text>
</comment>
<comment type="similarity">
    <text evidence="1">Belongs to the PNP/UDP phosphorylase family. MtnN subfamily.</text>
</comment>
<proteinExistence type="inferred from homology"/>
<feature type="chain" id="PRO_0000359296" description="5'-methylthioadenosine/S-adenosylhomocysteine nucleosidase">
    <location>
        <begin position="1"/>
        <end position="232"/>
    </location>
</feature>
<feature type="active site" description="Proton acceptor" evidence="1">
    <location>
        <position position="12"/>
    </location>
</feature>
<feature type="active site" description="Proton donor" evidence="1">
    <location>
        <position position="197"/>
    </location>
</feature>
<feature type="binding site" evidence="1">
    <location>
        <position position="78"/>
    </location>
    <ligand>
        <name>substrate</name>
    </ligand>
</feature>
<feature type="binding site" evidence="1">
    <location>
        <position position="152"/>
    </location>
    <ligand>
        <name>substrate</name>
    </ligand>
</feature>
<feature type="binding site" evidence="1">
    <location>
        <begin position="173"/>
        <end position="174"/>
    </location>
    <ligand>
        <name>substrate</name>
    </ligand>
</feature>